<feature type="chain" id="PRO_0000342303" description="Uncharacterized protein 158B">
    <location>
        <begin position="1"/>
        <end position="158"/>
    </location>
</feature>
<gene>
    <name type="ORF">158b</name>
</gene>
<sequence length="158" mass="18809">MNFDDYFCKLQCCYWREFEFAYSKLDVKDKTITIIGNDCGSSALYFLLKGAKKIIGFEKEEKLNQIFKETVCKEFKICDKVESKGEWKSNEYPDTDILVMDCEGCEKNLDFSKLQKYKQYCIAIHDWTENRFDLLRKLYGTILTFVTDDNREFVFCKL</sequence>
<proteinExistence type="predicted"/>
<organismHost>
    <name type="scientific">Saccharolobus islandicus</name>
    <name type="common">Sulfolobus islandicus</name>
    <dbReference type="NCBI Taxonomy" id="43080"/>
</organismHost>
<protein>
    <recommendedName>
        <fullName>Uncharacterized protein 158B</fullName>
    </recommendedName>
</protein>
<reference key="1">
    <citation type="journal article" date="2001" name="Virology">
        <title>Sequences and replication of genomes of the archaeal rudiviruses SIRV1 and SIRV2: relationships to the archaeal lipothrixvirus SIFV and some eukaryal viruses.</title>
        <authorList>
            <person name="Peng X."/>
            <person name="Blum H."/>
            <person name="She Q."/>
            <person name="Mallok S."/>
            <person name="Bruegger K."/>
            <person name="Garrett R.A."/>
            <person name="Zillig W."/>
            <person name="Prangishvili D."/>
        </authorList>
    </citation>
    <scope>NUCLEOTIDE SEQUENCE [LARGE SCALE GENOMIC DNA]</scope>
    <source>
        <strain>Isolate variant VIII</strain>
    </source>
</reference>
<reference key="2">
    <citation type="journal article" date="2004" name="Mol. Microbiol.">
        <title>Multiple variants of the archaeal DNA rudivirus SIRV1 in a single host and a novel mechanism of genomic variation.</title>
        <authorList>
            <person name="Peng X."/>
            <person name="Kessler A."/>
            <person name="Phan H."/>
            <person name="Garrett R.A."/>
            <person name="Prangishvili D."/>
        </authorList>
    </citation>
    <scope>NUCLEOTIDE SEQUENCE [LARGE SCALE GENOMIC DNA]</scope>
    <source>
        <strain>Isolate variant XX</strain>
    </source>
</reference>
<organism>
    <name type="scientific">Sulfolobus islandicus rod-shaped virus 1</name>
    <name type="common">SIRV-1</name>
    <name type="synonym">Sulfolobus virus SIRV-1</name>
    <dbReference type="NCBI Taxonomy" id="157898"/>
    <lineage>
        <taxon>Viruses</taxon>
        <taxon>Adnaviria</taxon>
        <taxon>Zilligvirae</taxon>
        <taxon>Taleaviricota</taxon>
        <taxon>Tokiviricetes</taxon>
        <taxon>Ligamenvirales</taxon>
        <taxon>Rudiviridae</taxon>
        <taxon>Icerudivirus</taxon>
        <taxon>Icerudivirus SIRV1</taxon>
    </lineage>
</organism>
<accession>Q8QL23</accession>
<accession>Q5TJ86</accession>
<name>Y158B_SIRV1</name>
<keyword id="KW-1185">Reference proteome</keyword>
<dbReference type="EMBL" id="AJ414696">
    <property type="protein sequence ID" value="CAC93988.1"/>
    <property type="molecule type" value="Genomic_DNA"/>
</dbReference>
<dbReference type="EMBL" id="AJ748296">
    <property type="protein sequence ID" value="CAG38852.1"/>
    <property type="molecule type" value="Genomic_DNA"/>
</dbReference>
<dbReference type="RefSeq" id="NP_666621.1">
    <property type="nucleotide sequence ID" value="NC_004087.1"/>
</dbReference>
<dbReference type="KEGG" id="vg:951367"/>
<dbReference type="OrthoDB" id="10155at10239"/>
<dbReference type="Proteomes" id="UP000002270">
    <property type="component" value="Genome"/>
</dbReference>
<dbReference type="Proteomes" id="UP000223181">
    <property type="component" value="Segment"/>
</dbReference>